<protein>
    <recommendedName>
        <fullName>Ankyrin repeat, SAM and basic leucine zipper domain-containing protein 1</fullName>
    </recommendedName>
    <alternativeName>
        <fullName>Germ cell-specific ankyrin, SAM and basic leucine zipper domain-containing protein</fullName>
    </alternativeName>
</protein>
<reference key="1">
    <citation type="submission" date="2006-01" db="EMBL/GenBank/DDBJ databases">
        <title>NISC comparative sequencing initiative.</title>
        <authorList>
            <person name="Antonellis A."/>
            <person name="Ayele K."/>
            <person name="Benjamin B."/>
            <person name="Blakesley R.W."/>
            <person name="Boakye A."/>
            <person name="Bouffard G.G."/>
            <person name="Brinkley C."/>
            <person name="Brooks S."/>
            <person name="Chu G."/>
            <person name="Coleman H."/>
            <person name="Engle J."/>
            <person name="Gestole M."/>
            <person name="Greene A."/>
            <person name="Guan X."/>
            <person name="Gupta J."/>
            <person name="Haghighi P."/>
            <person name="Han J."/>
            <person name="Hansen N."/>
            <person name="Ho S.-L."/>
            <person name="Hu P."/>
            <person name="Hunter G."/>
            <person name="Hurle B."/>
            <person name="Idol J.R."/>
            <person name="Kwong P."/>
            <person name="Laric P."/>
            <person name="Larson S."/>
            <person name="Lee-Lin S.-Q."/>
            <person name="Legaspi R."/>
            <person name="Madden M."/>
            <person name="Maduro Q.L."/>
            <person name="Maduro V.B."/>
            <person name="Margulies E.H."/>
            <person name="Masiello C."/>
            <person name="Maskeri B."/>
            <person name="McDowell J."/>
            <person name="Mojidi H.A."/>
            <person name="Mullikin J.C."/>
            <person name="Oestreicher J.S."/>
            <person name="Park M."/>
            <person name="Portnoy M.E."/>
            <person name="Prasad A."/>
            <person name="Puri O."/>
            <person name="Reddix-Dugue N."/>
            <person name="Schandler K."/>
            <person name="Schueler M.G."/>
            <person name="Sison C."/>
            <person name="Stantripop S."/>
            <person name="Stephen E."/>
            <person name="Taye A."/>
            <person name="Thomas J.W."/>
            <person name="Thomas P.J."/>
            <person name="Tsipouri V."/>
            <person name="Ung L."/>
            <person name="Vogt J.L."/>
            <person name="Wetherby K.D."/>
            <person name="Young A."/>
            <person name="Green E.D."/>
        </authorList>
    </citation>
    <scope>NUCLEOTIDE SEQUENCE [LARGE SCALE GENOMIC DNA]</scope>
</reference>
<feature type="chain" id="PRO_0000250479" description="Ankyrin repeat, SAM and basic leucine zipper domain-containing protein 1">
    <location>
        <begin position="1"/>
        <end position="475"/>
    </location>
</feature>
<feature type="repeat" description="ANK 1">
    <location>
        <begin position="45"/>
        <end position="74"/>
    </location>
</feature>
<feature type="repeat" description="ANK 2">
    <location>
        <begin position="78"/>
        <end position="107"/>
    </location>
</feature>
<feature type="repeat" description="ANK 3">
    <location>
        <begin position="110"/>
        <end position="144"/>
    </location>
</feature>
<feature type="repeat" description="ANK 4">
    <location>
        <begin position="148"/>
        <end position="177"/>
    </location>
</feature>
<feature type="repeat" description="ANK 5">
    <location>
        <begin position="181"/>
        <end position="210"/>
    </location>
</feature>
<feature type="repeat" description="ANK 6">
    <location>
        <begin position="214"/>
        <end position="243"/>
    </location>
</feature>
<feature type="domain" description="SAM">
    <location>
        <begin position="272"/>
        <end position="334"/>
    </location>
</feature>
<feature type="region of interest" description="Disordered" evidence="3">
    <location>
        <begin position="1"/>
        <end position="24"/>
    </location>
</feature>
<feature type="modified residue" description="Phosphoserine" evidence="2">
    <location>
        <position position="17"/>
    </location>
</feature>
<feature type="modified residue" description="Phosphoserine" evidence="2">
    <location>
        <position position="18"/>
    </location>
</feature>
<feature type="modified residue" description="Phosphoserine" evidence="2">
    <location>
        <position position="20"/>
    </location>
</feature>
<comment type="function">
    <text evidence="1">Plays a central role during spermatogenesis by repressing transposable elements and preventing their mobilization, which is essential for the germline integrity. Acts via the piRNA metabolic process, which mediates the repression of transposable elements during meiosis by forming complexes composed of piRNAs and Piwi proteins and governs the methylation and subsequent repression of transposons. Its association with pi-bodies suggests a participation in the primary piRNAs metabolic process. Required prior to the pachytene stage to facilitate the production of multiple types of piRNAs, including those associated with repeats involved in the regulation of retrotransposons. May act by mediating protein-protein interactions during germ cell maturation (By similarity).</text>
</comment>
<comment type="subunit">
    <text evidence="1">Interacts with DDX4, PIWIL1, RANBP9 and TDRD1.</text>
</comment>
<comment type="subcellular location">
    <subcellularLocation>
        <location evidence="1">Cytoplasm</location>
    </subcellularLocation>
    <text evidence="1">Component of the meiotic nuage, also named P granule, a germ-cell-specific organelle required to repress transposon activity during meiosis. Specifically localizes to pi-bodies, a subset of the nuage which contains primary piRNAs (By similarity).</text>
</comment>
<dbReference type="EMBL" id="DP000025">
    <property type="protein sequence ID" value="ABC87454.1"/>
    <property type="molecule type" value="Genomic_DNA"/>
</dbReference>
<dbReference type="RefSeq" id="XP_004046150.1">
    <property type="nucleotide sequence ID" value="XM_004046102.3"/>
</dbReference>
<dbReference type="SMR" id="Q2IBF5"/>
<dbReference type="FunCoup" id="Q2IBF5">
    <property type="interactions" value="24"/>
</dbReference>
<dbReference type="STRING" id="9593.ENSGGOP00000002622"/>
<dbReference type="Ensembl" id="ENSGGOT00000002676.3">
    <property type="protein sequence ID" value="ENSGGOP00000002622.2"/>
    <property type="gene ID" value="ENSGGOG00000002659.3"/>
</dbReference>
<dbReference type="GeneID" id="101131130"/>
<dbReference type="KEGG" id="ggo:101131130"/>
<dbReference type="CTD" id="136991"/>
<dbReference type="eggNOG" id="KOG0504">
    <property type="taxonomic scope" value="Eukaryota"/>
</dbReference>
<dbReference type="GeneTree" id="ENSGT00880000138051"/>
<dbReference type="HOGENOM" id="CLU_053259_0_0_1"/>
<dbReference type="InParanoid" id="Q2IBF5"/>
<dbReference type="OMA" id="PFMFACR"/>
<dbReference type="OrthoDB" id="4259at9604"/>
<dbReference type="Proteomes" id="UP000001519">
    <property type="component" value="Chromosome 7"/>
</dbReference>
<dbReference type="Bgee" id="ENSGGOG00000002659">
    <property type="expression patterns" value="Expressed in testis"/>
</dbReference>
<dbReference type="GO" id="GO:0071546">
    <property type="term" value="C:pi-body"/>
    <property type="evidence" value="ECO:0000250"/>
    <property type="project" value="UniProtKB"/>
</dbReference>
<dbReference type="GO" id="GO:0030154">
    <property type="term" value="P:cell differentiation"/>
    <property type="evidence" value="ECO:0007669"/>
    <property type="project" value="UniProtKB-KW"/>
</dbReference>
<dbReference type="GO" id="GO:0007140">
    <property type="term" value="P:male meiotic nuclear division"/>
    <property type="evidence" value="ECO:0000250"/>
    <property type="project" value="UniProtKB"/>
</dbReference>
<dbReference type="GO" id="GO:0031047">
    <property type="term" value="P:regulatory ncRNA-mediated gene silencing"/>
    <property type="evidence" value="ECO:0007669"/>
    <property type="project" value="UniProtKB-KW"/>
</dbReference>
<dbReference type="GO" id="GO:0007283">
    <property type="term" value="P:spermatogenesis"/>
    <property type="evidence" value="ECO:0000250"/>
    <property type="project" value="UniProtKB"/>
</dbReference>
<dbReference type="GO" id="GO:0010526">
    <property type="term" value="P:transposable element silencing"/>
    <property type="evidence" value="ECO:0000250"/>
    <property type="project" value="UniProtKB"/>
</dbReference>
<dbReference type="CDD" id="cd09521">
    <property type="entry name" value="SAM_ASZ1"/>
    <property type="match status" value="1"/>
</dbReference>
<dbReference type="FunFam" id="1.25.40.20:FF:000192">
    <property type="entry name" value="Ankyrin repeat, SAM and basic leucine zipper domain-containing 1"/>
    <property type="match status" value="1"/>
</dbReference>
<dbReference type="FunFam" id="1.10.150.50:FF:000060">
    <property type="entry name" value="Ankyrin repeat, SAM and basic leucine zipper domain-containing protein 1"/>
    <property type="match status" value="1"/>
</dbReference>
<dbReference type="Gene3D" id="1.25.40.20">
    <property type="entry name" value="Ankyrin repeat-containing domain"/>
    <property type="match status" value="1"/>
</dbReference>
<dbReference type="Gene3D" id="1.10.150.50">
    <property type="entry name" value="Transcription Factor, Ets-1"/>
    <property type="match status" value="1"/>
</dbReference>
<dbReference type="InterPro" id="IPR002110">
    <property type="entry name" value="Ankyrin_rpt"/>
</dbReference>
<dbReference type="InterPro" id="IPR036770">
    <property type="entry name" value="Ankyrin_rpt-contain_sf"/>
</dbReference>
<dbReference type="InterPro" id="IPR042650">
    <property type="entry name" value="Asz1_SAM"/>
</dbReference>
<dbReference type="InterPro" id="IPR001660">
    <property type="entry name" value="SAM"/>
</dbReference>
<dbReference type="InterPro" id="IPR013761">
    <property type="entry name" value="SAM/pointed_sf"/>
</dbReference>
<dbReference type="PANTHER" id="PTHR24157">
    <property type="entry name" value="ANKYRIN REPEAT, SAM AND BASIC LEUCINE ZIPPER DOMAIN-CONTAINING PROTEIN 1"/>
    <property type="match status" value="1"/>
</dbReference>
<dbReference type="PANTHER" id="PTHR24157:SF3">
    <property type="entry name" value="ANKYRIN REPEAT, SAM AND BASIC LEUCINE ZIPPER DOMAIN-CONTAINING PROTEIN 1"/>
    <property type="match status" value="1"/>
</dbReference>
<dbReference type="Pfam" id="PF00023">
    <property type="entry name" value="Ank"/>
    <property type="match status" value="1"/>
</dbReference>
<dbReference type="Pfam" id="PF12796">
    <property type="entry name" value="Ank_2"/>
    <property type="match status" value="1"/>
</dbReference>
<dbReference type="Pfam" id="PF07647">
    <property type="entry name" value="SAM_2"/>
    <property type="match status" value="1"/>
</dbReference>
<dbReference type="PRINTS" id="PR01415">
    <property type="entry name" value="ANKYRIN"/>
</dbReference>
<dbReference type="SMART" id="SM00248">
    <property type="entry name" value="ANK"/>
    <property type="match status" value="5"/>
</dbReference>
<dbReference type="SUPFAM" id="SSF48403">
    <property type="entry name" value="Ankyrin repeat"/>
    <property type="match status" value="1"/>
</dbReference>
<dbReference type="SUPFAM" id="SSF140860">
    <property type="entry name" value="Pseudo ankyrin repeat-like"/>
    <property type="match status" value="1"/>
</dbReference>
<dbReference type="SUPFAM" id="SSF47769">
    <property type="entry name" value="SAM/Pointed domain"/>
    <property type="match status" value="1"/>
</dbReference>
<dbReference type="PROSITE" id="PS50297">
    <property type="entry name" value="ANK_REP_REGION"/>
    <property type="match status" value="1"/>
</dbReference>
<dbReference type="PROSITE" id="PS50088">
    <property type="entry name" value="ANK_REPEAT"/>
    <property type="match status" value="3"/>
</dbReference>
<sequence>MAASALRGPPVAGGGESSESEDDGWEIGYLDRTSQKLKGLLPIEEKKEKFKKAMTIGDVSLVQELLDSGISVDSTFQYGWTPLMYAASVANAELVRVLLDRGANASFEKDKQSILITACSAHGSEEQILKCVELLLSRNADPNVACRRLMTPIMYAARDGHTQVVALLVAHGAEVNTQDENGYTALTWAARQGHKNIVLKLLELGANKMLQTKDGKMPSEIAKRNKHHEIFNLLSFTLNPLEGRLQQLTKEDTICKILTTDSDREKDHIFSSYTAFGDLEVFLHGLGLEHMTDLLKERDITLRHLLTMREDEFTKNGITSKDQQKILAALKELQVEEIQFGELSEETKLEISGDEFLNFLLKLNKQCGHLITAVQNVITELPVNSQKITLEWASPQNFTSVCEELVNNVEDLSEKVCKLKDLIQKLQNERENDPTHIQLREEVSTWNSRILKRTAITICGFGFLLFICKLTFQRK</sequence>
<keyword id="KW-0040">ANK repeat</keyword>
<keyword id="KW-0963">Cytoplasm</keyword>
<keyword id="KW-0217">Developmental protein</keyword>
<keyword id="KW-0221">Differentiation</keyword>
<keyword id="KW-0469">Meiosis</keyword>
<keyword id="KW-0597">Phosphoprotein</keyword>
<keyword id="KW-1185">Reference proteome</keyword>
<keyword id="KW-0677">Repeat</keyword>
<keyword id="KW-0943">RNA-mediated gene silencing</keyword>
<keyword id="KW-0744">Spermatogenesis</keyword>
<name>ASZ1_GORGO</name>
<proteinExistence type="inferred from homology"/>
<evidence type="ECO:0000250" key="1"/>
<evidence type="ECO:0000250" key="2">
    <source>
        <dbReference type="UniProtKB" id="Q8VD46"/>
    </source>
</evidence>
<evidence type="ECO:0000256" key="3">
    <source>
        <dbReference type="SAM" id="MobiDB-lite"/>
    </source>
</evidence>
<organism>
    <name type="scientific">Gorilla gorilla gorilla</name>
    <name type="common">Western lowland gorilla</name>
    <dbReference type="NCBI Taxonomy" id="9595"/>
    <lineage>
        <taxon>Eukaryota</taxon>
        <taxon>Metazoa</taxon>
        <taxon>Chordata</taxon>
        <taxon>Craniata</taxon>
        <taxon>Vertebrata</taxon>
        <taxon>Euteleostomi</taxon>
        <taxon>Mammalia</taxon>
        <taxon>Eutheria</taxon>
        <taxon>Euarchontoglires</taxon>
        <taxon>Primates</taxon>
        <taxon>Haplorrhini</taxon>
        <taxon>Catarrhini</taxon>
        <taxon>Hominidae</taxon>
        <taxon>Gorilla</taxon>
    </lineage>
</organism>
<accession>Q2IBF5</accession>
<gene>
    <name type="primary">ASZ1</name>
    <name type="synonym">GASZ</name>
</gene>